<dbReference type="EC" id="2.3.2.27" evidence="3"/>
<dbReference type="EMBL" id="BC055388">
    <property type="protein sequence ID" value="AAH55388.1"/>
    <property type="status" value="ALT_INIT"/>
    <property type="molecule type" value="mRNA"/>
</dbReference>
<dbReference type="RefSeq" id="NP_955843.2">
    <property type="nucleotide sequence ID" value="NM_199549.2"/>
</dbReference>
<dbReference type="SMR" id="Q7SXR3"/>
<dbReference type="FunCoup" id="Q7SXR3">
    <property type="interactions" value="2397"/>
</dbReference>
<dbReference type="STRING" id="7955.ENSDARP00000070240"/>
<dbReference type="PaxDb" id="7955-ENSDARP00000070240"/>
<dbReference type="Ensembl" id="ENSDART00000075759">
    <property type="protein sequence ID" value="ENSDARP00000070240"/>
    <property type="gene ID" value="ENSDARG00000053691"/>
</dbReference>
<dbReference type="GeneID" id="321575"/>
<dbReference type="KEGG" id="dre:321575"/>
<dbReference type="AGR" id="ZFIN:ZDB-GENE-030131-294"/>
<dbReference type="CTD" id="10296"/>
<dbReference type="ZFIN" id="ZDB-GENE-030131-294">
    <property type="gene designation" value="maea"/>
</dbReference>
<dbReference type="eggNOG" id="KOG0396">
    <property type="taxonomic scope" value="Eukaryota"/>
</dbReference>
<dbReference type="HOGENOM" id="CLU_027445_0_1_1"/>
<dbReference type="InParanoid" id="Q7SXR3"/>
<dbReference type="OMA" id="ANHETAR"/>
<dbReference type="OrthoDB" id="1933455at2759"/>
<dbReference type="PhylomeDB" id="Q7SXR3"/>
<dbReference type="TreeFam" id="TF314273"/>
<dbReference type="Reactome" id="R-DRE-9861718">
    <property type="pathway name" value="Regulation of pyruvate metabolism"/>
</dbReference>
<dbReference type="PRO" id="PR:Q7SXR3"/>
<dbReference type="Proteomes" id="UP000000437">
    <property type="component" value="Chromosome 14"/>
</dbReference>
<dbReference type="Bgee" id="ENSDARG00000053691">
    <property type="expression patterns" value="Expressed in cleaving embryo and 28 other cell types or tissues"/>
</dbReference>
<dbReference type="GO" id="GO:0005737">
    <property type="term" value="C:cytoplasm"/>
    <property type="evidence" value="ECO:0000318"/>
    <property type="project" value="GO_Central"/>
</dbReference>
<dbReference type="GO" id="GO:0005856">
    <property type="term" value="C:cytoskeleton"/>
    <property type="evidence" value="ECO:0007669"/>
    <property type="project" value="UniProtKB-SubCell"/>
</dbReference>
<dbReference type="GO" id="GO:0034657">
    <property type="term" value="C:GID complex"/>
    <property type="evidence" value="ECO:0000318"/>
    <property type="project" value="GO_Central"/>
</dbReference>
<dbReference type="GO" id="GO:0016363">
    <property type="term" value="C:nuclear matrix"/>
    <property type="evidence" value="ECO:0007669"/>
    <property type="project" value="UniProtKB-SubCell"/>
</dbReference>
<dbReference type="GO" id="GO:0005654">
    <property type="term" value="C:nucleoplasm"/>
    <property type="evidence" value="ECO:0000250"/>
    <property type="project" value="UniProtKB"/>
</dbReference>
<dbReference type="GO" id="GO:0005634">
    <property type="term" value="C:nucleus"/>
    <property type="evidence" value="ECO:0000318"/>
    <property type="project" value="GO_Central"/>
</dbReference>
<dbReference type="GO" id="GO:0005886">
    <property type="term" value="C:plasma membrane"/>
    <property type="evidence" value="ECO:0007669"/>
    <property type="project" value="UniProtKB-SubCell"/>
</dbReference>
<dbReference type="GO" id="GO:0003779">
    <property type="term" value="F:actin binding"/>
    <property type="evidence" value="ECO:0007669"/>
    <property type="project" value="UniProtKB-KW"/>
</dbReference>
<dbReference type="GO" id="GO:0061630">
    <property type="term" value="F:ubiquitin protein ligase activity"/>
    <property type="evidence" value="ECO:0007669"/>
    <property type="project" value="InterPro"/>
</dbReference>
<dbReference type="GO" id="GO:0008270">
    <property type="term" value="F:zinc ion binding"/>
    <property type="evidence" value="ECO:0007669"/>
    <property type="project" value="UniProtKB-KW"/>
</dbReference>
<dbReference type="GO" id="GO:0051301">
    <property type="term" value="P:cell division"/>
    <property type="evidence" value="ECO:0007669"/>
    <property type="project" value="UniProtKB-KW"/>
</dbReference>
<dbReference type="GO" id="GO:0043249">
    <property type="term" value="P:erythrocyte maturation"/>
    <property type="evidence" value="ECO:0007669"/>
    <property type="project" value="UniProtKB-KW"/>
</dbReference>
<dbReference type="GO" id="GO:0043161">
    <property type="term" value="P:proteasome-mediated ubiquitin-dependent protein catabolic process"/>
    <property type="evidence" value="ECO:0000318"/>
    <property type="project" value="GO_Central"/>
</dbReference>
<dbReference type="CDD" id="cd16659">
    <property type="entry name" value="RING-Ubox_Emp"/>
    <property type="match status" value="1"/>
</dbReference>
<dbReference type="InterPro" id="IPR013144">
    <property type="entry name" value="CRA_dom"/>
</dbReference>
<dbReference type="InterPro" id="IPR024964">
    <property type="entry name" value="CTLH/CRA"/>
</dbReference>
<dbReference type="InterPro" id="IPR006595">
    <property type="entry name" value="CTLH_C"/>
</dbReference>
<dbReference type="InterPro" id="IPR045098">
    <property type="entry name" value="Fyv10_fam"/>
</dbReference>
<dbReference type="InterPro" id="IPR006594">
    <property type="entry name" value="LisH"/>
</dbReference>
<dbReference type="InterPro" id="IPR044063">
    <property type="entry name" value="ZF_RING_GID"/>
</dbReference>
<dbReference type="PANTHER" id="PTHR12170:SF2">
    <property type="entry name" value="E3 UBIQUITIN-PROTEIN TRANSFERASE MAEA"/>
    <property type="match status" value="1"/>
</dbReference>
<dbReference type="PANTHER" id="PTHR12170">
    <property type="entry name" value="MACROPHAGE ERYTHROBLAST ATTACHER-RELATED"/>
    <property type="match status" value="1"/>
</dbReference>
<dbReference type="Pfam" id="PF10607">
    <property type="entry name" value="CTLH"/>
    <property type="match status" value="1"/>
</dbReference>
<dbReference type="SMART" id="SM00757">
    <property type="entry name" value="CRA"/>
    <property type="match status" value="1"/>
</dbReference>
<dbReference type="SMART" id="SM00668">
    <property type="entry name" value="CTLH"/>
    <property type="match status" value="1"/>
</dbReference>
<dbReference type="SMART" id="SM00667">
    <property type="entry name" value="LisH"/>
    <property type="match status" value="1"/>
</dbReference>
<dbReference type="SUPFAM" id="SSF57850">
    <property type="entry name" value="RING/U-box"/>
    <property type="match status" value="1"/>
</dbReference>
<dbReference type="PROSITE" id="PS50897">
    <property type="entry name" value="CTLH"/>
    <property type="match status" value="1"/>
</dbReference>
<dbReference type="PROSITE" id="PS50896">
    <property type="entry name" value="LISH"/>
    <property type="match status" value="1"/>
</dbReference>
<dbReference type="PROSITE" id="PS51867">
    <property type="entry name" value="ZF_RING_GID"/>
    <property type="match status" value="1"/>
</dbReference>
<sequence>MAVQETAAQLSMALKVQEYPTLKVPYETLNKRFRAAQKNIDRETSHVTMVVAELEKTLSSFPVVDTVVSLLDGVVEKLSALKRKAAESIQAEDESAKLCKRRIEHLKEHSSDQPASVNVWKKKRMDRMMVEHLLRCGYYNTAVKLARQSGIEDLVNIEMFLTAKEVEESLERQETATCLAWCHDNKSRLRKMKSCLEFSLRIQEFIELIRQNKRMDAVRHARKHFSQAEGGQLDEVRQVMGMLAFPSDTHISPYKDLLDPARWKMLIQQFRYDNYRLHQLGNNSVFTITLQAGLSAIKTPQCYKEDGTSKNPDCPVCSKSLNKLAQPLPMAHCANSRLVCKISGEVMNENNPPMMLPNGYVYGYNSLLSIRQDDKVICPRTKEVFNFSQAEKVYIM</sequence>
<proteinExistence type="evidence at transcript level"/>
<comment type="function">
    <text evidence="2 3">Core component of the CTLH E3 ubiquitin-protein ligase complex that selectively accepts ubiquitin from UBE2H and mediates ubiquitination and subsequent proteasomal degradation of the transcription factor HBP1. MAEA and RMND5A are both required for catalytic activity of the CTLH E3 ubiquitin-protein ligase complex. MAEA is required for normal cell proliferation. The CTLH E3 ubiquitin-protein ligase complex is not required for the degradation of enzymes involved in gluconeogenesis, such as FBP1 (By similarity). Plays a role in erythroblast maturation and in the development of mature macrophages (By similarity). Mediates the attachment of erythroid cell to mature macrophages; this MAEA-mediated contact inhibits erythroid cell apoptosis (By similarity). Participates in erythroblastic island formation, which is the functional unit of definitive erythropoiesis. Associates with F-actin to regulate actin distribution in erythroblasts and macrophages (By similarity). May contribute to nuclear architecture and cells division events (By similarity).</text>
</comment>
<comment type="catalytic activity">
    <reaction evidence="3">
        <text>S-ubiquitinyl-[E2 ubiquitin-conjugating enzyme]-L-cysteine + [acceptor protein]-L-lysine = [E2 ubiquitin-conjugating enzyme]-L-cysteine + N(6)-ubiquitinyl-[acceptor protein]-L-lysine.</text>
        <dbReference type="EC" id="2.3.2.27"/>
    </reaction>
</comment>
<comment type="subunit">
    <text evidence="3">Identified in the CTLH complex that contains at least MAEA, RMND5A, GID8, WDR26, and RANBP9 and/or RANBP10 as the catalytic core. Interacts with F-actin.</text>
</comment>
<comment type="subcellular location">
    <subcellularLocation>
        <location evidence="2">Nucleus matrix</location>
    </subcellularLocation>
    <subcellularLocation>
        <location evidence="2">Cell membrane</location>
    </subcellularLocation>
    <subcellularLocation>
        <location evidence="2">Cytoplasm</location>
        <location evidence="2">Cytoskeleton</location>
    </subcellularLocation>
    <text evidence="2">Migration from nuclear matrix in immature macrophages to cell surface in mature ones.</text>
</comment>
<comment type="domain">
    <text evidence="3">The expected RING-type zinc finger domain is highly divergent and most of the expected Cys residues are not conserved. Still, the protein is required for CTLH complex E3 ubiquitin-protein transferase activity. In addition, the conserved Cys-314 in this highly divergent region is required for ubiquitination by the yeast GID complex, suggesting a direct role in catalyzing ubiquitination.</text>
</comment>
<comment type="sequence caution" evidence="7">
    <conflict type="erroneous initiation">
        <sequence resource="EMBL-CDS" id="AAH55388"/>
    </conflict>
</comment>
<name>MAEA_DANRE</name>
<keyword id="KW-0009">Actin-binding</keyword>
<keyword id="KW-0131">Cell cycle</keyword>
<keyword id="KW-0132">Cell division</keyword>
<keyword id="KW-1003">Cell membrane</keyword>
<keyword id="KW-0963">Cytoplasm</keyword>
<keyword id="KW-0206">Cytoskeleton</keyword>
<keyword id="KW-0265">Erythrocyte maturation</keyword>
<keyword id="KW-0472">Membrane</keyword>
<keyword id="KW-0479">Metal-binding</keyword>
<keyword id="KW-0539">Nucleus</keyword>
<keyword id="KW-1185">Reference proteome</keyword>
<keyword id="KW-0808">Transferase</keyword>
<keyword id="KW-0833">Ubl conjugation pathway</keyword>
<keyword id="KW-0862">Zinc</keyword>
<keyword id="KW-0863">Zinc-finger</keyword>
<reference key="1">
    <citation type="submission" date="2003-07" db="EMBL/GenBank/DDBJ databases">
        <authorList>
            <consortium name="NIH - Zebrafish Gene Collection (ZGC) project"/>
        </authorList>
    </citation>
    <scope>NUCLEOTIDE SEQUENCE [LARGE SCALE MRNA]</scope>
    <source>
        <strain>AB</strain>
    </source>
</reference>
<organism>
    <name type="scientific">Danio rerio</name>
    <name type="common">Zebrafish</name>
    <name type="synonym">Brachydanio rerio</name>
    <dbReference type="NCBI Taxonomy" id="7955"/>
    <lineage>
        <taxon>Eukaryota</taxon>
        <taxon>Metazoa</taxon>
        <taxon>Chordata</taxon>
        <taxon>Craniata</taxon>
        <taxon>Vertebrata</taxon>
        <taxon>Euteleostomi</taxon>
        <taxon>Actinopterygii</taxon>
        <taxon>Neopterygii</taxon>
        <taxon>Teleostei</taxon>
        <taxon>Ostariophysi</taxon>
        <taxon>Cypriniformes</taxon>
        <taxon>Danionidae</taxon>
        <taxon>Danioninae</taxon>
        <taxon>Danio</taxon>
    </lineage>
</organism>
<protein>
    <recommendedName>
        <fullName>E3 ubiquitin-protein transferase MAEA</fullName>
        <ecNumber evidence="3">2.3.2.27</ecNumber>
    </recommendedName>
    <alternativeName>
        <fullName>Macrophage erythroblast attacher</fullName>
    </alternativeName>
</protein>
<gene>
    <name type="primary">maea</name>
    <name type="ORF">zgc:63708</name>
</gene>
<feature type="chain" id="PRO_0000284942" description="E3 ubiquitin-protein transferase MAEA">
    <location>
        <begin position="1"/>
        <end position="396"/>
    </location>
</feature>
<feature type="domain" description="LisH" evidence="5">
    <location>
        <begin position="121"/>
        <end position="153"/>
    </location>
</feature>
<feature type="domain" description="CTLH" evidence="4">
    <location>
        <begin position="159"/>
        <end position="216"/>
    </location>
</feature>
<feature type="zinc finger region" description="RING-Gid-type" evidence="6">
    <location>
        <begin position="314"/>
        <end position="381"/>
    </location>
</feature>
<feature type="site" description="Essential for ubiquitin ligase activity" evidence="1">
    <location>
        <position position="314"/>
    </location>
</feature>
<evidence type="ECO:0000250" key="1">
    <source>
        <dbReference type="UniProtKB" id="P40492"/>
    </source>
</evidence>
<evidence type="ECO:0000250" key="2">
    <source>
        <dbReference type="UniProtKB" id="Q4VC33"/>
    </source>
</evidence>
<evidence type="ECO:0000250" key="3">
    <source>
        <dbReference type="UniProtKB" id="Q7L5Y9"/>
    </source>
</evidence>
<evidence type="ECO:0000255" key="4">
    <source>
        <dbReference type="PROSITE-ProRule" id="PRU00058"/>
    </source>
</evidence>
<evidence type="ECO:0000255" key="5">
    <source>
        <dbReference type="PROSITE-ProRule" id="PRU00126"/>
    </source>
</evidence>
<evidence type="ECO:0000255" key="6">
    <source>
        <dbReference type="PROSITE-ProRule" id="PRU01215"/>
    </source>
</evidence>
<evidence type="ECO:0000305" key="7"/>
<accession>Q7SXR3</accession>